<feature type="chain" id="PRO_0000064462" description="Accumulates dyads protein 4">
    <location>
        <begin position="1"/>
        <end position="493"/>
    </location>
</feature>
<organism>
    <name type="scientific">Saccharomyces cerevisiae (strain ATCC 204508 / S288c)</name>
    <name type="common">Baker's yeast</name>
    <dbReference type="NCBI Taxonomy" id="559292"/>
    <lineage>
        <taxon>Eukaryota</taxon>
        <taxon>Fungi</taxon>
        <taxon>Dikarya</taxon>
        <taxon>Ascomycota</taxon>
        <taxon>Saccharomycotina</taxon>
        <taxon>Saccharomycetes</taxon>
        <taxon>Saccharomycetales</taxon>
        <taxon>Saccharomycetaceae</taxon>
        <taxon>Saccharomyces</taxon>
    </lineage>
</organism>
<gene>
    <name type="primary">ADY4</name>
    <name type="ordered locus">YLR227C</name>
    <name type="ORF">L8083.11</name>
</gene>
<proteinExistence type="evidence at protein level"/>
<protein>
    <recommendedName>
        <fullName>Accumulates dyads protein 4</fullName>
    </recommendedName>
</protein>
<reference key="1">
    <citation type="journal article" date="1997" name="Nature">
        <title>The nucleotide sequence of Saccharomyces cerevisiae chromosome XII.</title>
        <authorList>
            <person name="Johnston M."/>
            <person name="Hillier L.W."/>
            <person name="Riles L."/>
            <person name="Albermann K."/>
            <person name="Andre B."/>
            <person name="Ansorge W."/>
            <person name="Benes V."/>
            <person name="Brueckner M."/>
            <person name="Delius H."/>
            <person name="Dubois E."/>
            <person name="Duesterhoeft A."/>
            <person name="Entian K.-D."/>
            <person name="Floeth M."/>
            <person name="Goffeau A."/>
            <person name="Hebling U."/>
            <person name="Heumann K."/>
            <person name="Heuss-Neitzel D."/>
            <person name="Hilbert H."/>
            <person name="Hilger F."/>
            <person name="Kleine K."/>
            <person name="Koetter P."/>
            <person name="Louis E.J."/>
            <person name="Messenguy F."/>
            <person name="Mewes H.-W."/>
            <person name="Miosga T."/>
            <person name="Moestl D."/>
            <person name="Mueller-Auer S."/>
            <person name="Nentwich U."/>
            <person name="Obermaier B."/>
            <person name="Piravandi E."/>
            <person name="Pohl T.M."/>
            <person name="Portetelle D."/>
            <person name="Purnelle B."/>
            <person name="Rechmann S."/>
            <person name="Rieger M."/>
            <person name="Rinke M."/>
            <person name="Rose M."/>
            <person name="Scharfe M."/>
            <person name="Scherens B."/>
            <person name="Scholler P."/>
            <person name="Schwager C."/>
            <person name="Schwarz S."/>
            <person name="Underwood A.P."/>
            <person name="Urrestarazu L.A."/>
            <person name="Vandenbol M."/>
            <person name="Verhasselt P."/>
            <person name="Vierendeels F."/>
            <person name="Voet M."/>
            <person name="Volckaert G."/>
            <person name="Voss H."/>
            <person name="Wambutt R."/>
            <person name="Wedler E."/>
            <person name="Wedler H."/>
            <person name="Zimmermann F.K."/>
            <person name="Zollner A."/>
            <person name="Hani J."/>
            <person name="Hoheisel J.D."/>
        </authorList>
    </citation>
    <scope>NUCLEOTIDE SEQUENCE [LARGE SCALE GENOMIC DNA]</scope>
    <source>
        <strain>ATCC 204508 / S288c</strain>
    </source>
</reference>
<reference key="2">
    <citation type="journal article" date="2014" name="G3 (Bethesda)">
        <title>The reference genome sequence of Saccharomyces cerevisiae: Then and now.</title>
        <authorList>
            <person name="Engel S.R."/>
            <person name="Dietrich F.S."/>
            <person name="Fisk D.G."/>
            <person name="Binkley G."/>
            <person name="Balakrishnan R."/>
            <person name="Costanzo M.C."/>
            <person name="Dwight S.S."/>
            <person name="Hitz B.C."/>
            <person name="Karra K."/>
            <person name="Nash R.S."/>
            <person name="Weng S."/>
            <person name="Wong E.D."/>
            <person name="Lloyd P."/>
            <person name="Skrzypek M.S."/>
            <person name="Miyasato S.R."/>
            <person name="Simison M."/>
            <person name="Cherry J.M."/>
        </authorList>
    </citation>
    <scope>GENOME REANNOTATION</scope>
    <source>
        <strain>ATCC 204508 / S288c</strain>
    </source>
</reference>
<reference key="3">
    <citation type="journal article" date="2001" name="Curr. Biol.">
        <title>A screen for genes required for meiosis and spore formation based on whole-genome expression.</title>
        <authorList>
            <person name="Rabitsch K.P."/>
            <person name="Toth A."/>
            <person name="Galova M."/>
            <person name="Schleiffer A."/>
            <person name="Schaffner G."/>
            <person name="Aigner E."/>
            <person name="Rupp C."/>
            <person name="Penkner A.M."/>
            <person name="Moreno-Borchart A.C."/>
            <person name="Primig M."/>
            <person name="Esposito R.E."/>
            <person name="Klein F."/>
            <person name="Knop M."/>
            <person name="Nasmyth K."/>
        </authorList>
    </citation>
    <scope>IDENTIFICATION</scope>
</reference>
<reference key="4">
    <citation type="journal article" date="2003" name="Eukaryot. Cell">
        <title>Ady4p and Spo74p are components of the meiotic spindle pole body that promote growth of the prospore membrane in Saccharomyces cerevisiae.</title>
        <authorList>
            <person name="Nickas M.E."/>
            <person name="Schwartz C."/>
            <person name="Neiman A.M."/>
        </authorList>
    </citation>
    <scope>FUNCTION</scope>
    <scope>SUBCELLULAR LOCATION</scope>
    <scope>DEVELOPMENTAL STAGE</scope>
    <scope>INTERACTION WITH CNM67; SPO21 AND NUD1</scope>
</reference>
<evidence type="ECO:0000269" key="1">
    <source>
    </source>
</evidence>
<accession>Q05955</accession>
<accession>D6VYM7</accession>
<comment type="function">
    <text evidence="1">Involved in the pathway that organizes the shaping and sizing of the prospore membrane (PSM) during sporulation. May be required to stabilize the outer plaque of the spindle pole body (SPB).</text>
</comment>
<comment type="subunit">
    <text evidence="1">Interacts with CNM67, SPO21/MPC70 and NUD1.</text>
</comment>
<comment type="subcellular location">
    <subcellularLocation>
        <location evidence="1">Cytoplasm</location>
        <location evidence="1">Cytoskeleton</location>
        <location evidence="1">Microtubule organizing center</location>
        <location evidence="1">Spindle pole body</location>
    </subcellularLocation>
    <text>Localizes to the meiotic outer plaque of the SPB, at the end of the meiotic spindles.</text>
</comment>
<comment type="developmental stage">
    <text evidence="1">Meiosis-specific.</text>
</comment>
<dbReference type="EMBL" id="U19027">
    <property type="protein sequence ID" value="AAB67414.1"/>
    <property type="molecule type" value="Genomic_DNA"/>
</dbReference>
<dbReference type="EMBL" id="BK006945">
    <property type="protein sequence ID" value="DAA09543.1"/>
    <property type="molecule type" value="Genomic_DNA"/>
</dbReference>
<dbReference type="PIR" id="S51450">
    <property type="entry name" value="S51450"/>
</dbReference>
<dbReference type="RefSeq" id="NP_013328.1">
    <property type="nucleotide sequence ID" value="NM_001182114.1"/>
</dbReference>
<dbReference type="BioGRID" id="31494">
    <property type="interactions" value="188"/>
</dbReference>
<dbReference type="DIP" id="DIP-4786N"/>
<dbReference type="FunCoup" id="Q05955">
    <property type="interactions" value="35"/>
</dbReference>
<dbReference type="IntAct" id="Q05955">
    <property type="interactions" value="6"/>
</dbReference>
<dbReference type="STRING" id="4932.YLR227C"/>
<dbReference type="iPTMnet" id="Q05955"/>
<dbReference type="PaxDb" id="4932-YLR227C"/>
<dbReference type="PeptideAtlas" id="Q05955"/>
<dbReference type="EnsemblFungi" id="YLR227C_mRNA">
    <property type="protein sequence ID" value="YLR227C"/>
    <property type="gene ID" value="YLR227C"/>
</dbReference>
<dbReference type="GeneID" id="850924"/>
<dbReference type="KEGG" id="sce:YLR227C"/>
<dbReference type="AGR" id="SGD:S000004217"/>
<dbReference type="SGD" id="S000004217">
    <property type="gene designation" value="ADY4"/>
</dbReference>
<dbReference type="VEuPathDB" id="FungiDB:YLR227C"/>
<dbReference type="eggNOG" id="ENOG502S0MP">
    <property type="taxonomic scope" value="Eukaryota"/>
</dbReference>
<dbReference type="HOGENOM" id="CLU_043424_0_0_1"/>
<dbReference type="InParanoid" id="Q05955"/>
<dbReference type="OMA" id="FRWCLQF"/>
<dbReference type="OrthoDB" id="4065753at2759"/>
<dbReference type="BioCyc" id="YEAST:G3O-32341-MONOMER"/>
<dbReference type="BioGRID-ORCS" id="850924">
    <property type="hits" value="1 hit in 10 CRISPR screens"/>
</dbReference>
<dbReference type="CD-CODE" id="876000F7">
    <property type="entry name" value="Centrosome"/>
</dbReference>
<dbReference type="PRO" id="PR:Q05955"/>
<dbReference type="Proteomes" id="UP000002311">
    <property type="component" value="Chromosome XII"/>
</dbReference>
<dbReference type="RNAct" id="Q05955">
    <property type="molecule type" value="protein"/>
</dbReference>
<dbReference type="GO" id="GO:0005737">
    <property type="term" value="C:cytoplasm"/>
    <property type="evidence" value="ECO:0007669"/>
    <property type="project" value="UniProtKB-KW"/>
</dbReference>
<dbReference type="GO" id="GO:0035974">
    <property type="term" value="C:meiotic spindle pole body"/>
    <property type="evidence" value="ECO:0000314"/>
    <property type="project" value="SGD"/>
</dbReference>
<dbReference type="GO" id="GO:0005198">
    <property type="term" value="F:structural molecule activity"/>
    <property type="evidence" value="ECO:0000314"/>
    <property type="project" value="SGD"/>
</dbReference>
<dbReference type="GO" id="GO:0030437">
    <property type="term" value="P:ascospore formation"/>
    <property type="evidence" value="ECO:0000315"/>
    <property type="project" value="SGD"/>
</dbReference>
<dbReference type="GO" id="GO:0051301">
    <property type="term" value="P:cell division"/>
    <property type="evidence" value="ECO:0007669"/>
    <property type="project" value="UniProtKB-KW"/>
</dbReference>
<name>ADY4_YEAST</name>
<keyword id="KW-0131">Cell cycle</keyword>
<keyword id="KW-0132">Cell division</keyword>
<keyword id="KW-0963">Cytoplasm</keyword>
<keyword id="KW-0206">Cytoskeleton</keyword>
<keyword id="KW-0469">Meiosis</keyword>
<keyword id="KW-1185">Reference proteome</keyword>
<keyword id="KW-0749">Sporulation</keyword>
<sequence>MNKDVDYQTFKKSLRKEFKKAVKTILNLQAYNGDLIRDFLALYIPYHVVFYNLSIMKKGSPLRIQTNNLLKEALAKILNFNLAMGPKHIIKIMKKDKADPETMNKLKLVLYIKLFQGVFGHVDKNYNLAFQSFRWCLQFIAYSKRTRLFASIADEQIGAFYELCELFISMLCCHCFLIDLKENEALVGNNLKNFIKRQNPNYSHGFDLNEETKSLQWHWSLDEVDVIEALYCVAFDAMDKITLKFSKVNENFVFSQFFQYCAEIEEMLAILRGKIWECECDVFGPRIGLLVDSNHMNETIQKNILSITFKLKNDPQIICCLNKILEGLLLSSGVQFKVIQFFYVLKLYYMQDNEYTFEASSEMDKLTIECLCIIENIIDACDNPDEVTDYQLPKVLLTAMEGKLLVAEKISEDNDCSESLDDYHPRTYQFRHPRIIIDKMKTKLKQKLRFDSPKDPETDDHWIEYWKYCYQDNIGNLPDILSRIYQTFTDPSN</sequence>